<sequence length="84" mass="9535">MAKTQSPLQWLATTIIRGYQLLISPMMGPRCRFNPTCSHYAIEAIRLHGVVKGCWFAGKRILRCHPLHPGGEDPVPNKKHRCDK</sequence>
<gene>
    <name type="ordered locus">Spea_4258</name>
</gene>
<comment type="function">
    <text evidence="1">Could be involved in insertion of integral membrane proteins into the membrane.</text>
</comment>
<comment type="subcellular location">
    <subcellularLocation>
        <location evidence="1">Cell inner membrane</location>
        <topology evidence="1">Peripheral membrane protein</topology>
        <orientation evidence="1">Cytoplasmic side</orientation>
    </subcellularLocation>
</comment>
<comment type="similarity">
    <text evidence="1">Belongs to the UPF0161 family.</text>
</comment>
<organism>
    <name type="scientific">Shewanella pealeana (strain ATCC 700345 / ANG-SQ1)</name>
    <dbReference type="NCBI Taxonomy" id="398579"/>
    <lineage>
        <taxon>Bacteria</taxon>
        <taxon>Pseudomonadati</taxon>
        <taxon>Pseudomonadota</taxon>
        <taxon>Gammaproteobacteria</taxon>
        <taxon>Alteromonadales</taxon>
        <taxon>Shewanellaceae</taxon>
        <taxon>Shewanella</taxon>
    </lineage>
</organism>
<accession>A8HAI1</accession>
<dbReference type="EMBL" id="CP000851">
    <property type="protein sequence ID" value="ABV89568.1"/>
    <property type="molecule type" value="Genomic_DNA"/>
</dbReference>
<dbReference type="RefSeq" id="WP_012157445.1">
    <property type="nucleotide sequence ID" value="NC_009901.1"/>
</dbReference>
<dbReference type="STRING" id="398579.Spea_4258"/>
<dbReference type="KEGG" id="spl:Spea_4258"/>
<dbReference type="eggNOG" id="COG0759">
    <property type="taxonomic scope" value="Bacteria"/>
</dbReference>
<dbReference type="HOGENOM" id="CLU_144811_5_2_6"/>
<dbReference type="OrthoDB" id="9801753at2"/>
<dbReference type="Proteomes" id="UP000002608">
    <property type="component" value="Chromosome"/>
</dbReference>
<dbReference type="GO" id="GO:0005886">
    <property type="term" value="C:plasma membrane"/>
    <property type="evidence" value="ECO:0007669"/>
    <property type="project" value="UniProtKB-SubCell"/>
</dbReference>
<dbReference type="HAMAP" id="MF_00386">
    <property type="entry name" value="UPF0161_YidD"/>
    <property type="match status" value="1"/>
</dbReference>
<dbReference type="InterPro" id="IPR002696">
    <property type="entry name" value="Membr_insert_effic_factor_YidD"/>
</dbReference>
<dbReference type="NCBIfam" id="TIGR00278">
    <property type="entry name" value="membrane protein insertion efficiency factor YidD"/>
    <property type="match status" value="1"/>
</dbReference>
<dbReference type="PANTHER" id="PTHR33383">
    <property type="entry name" value="MEMBRANE PROTEIN INSERTION EFFICIENCY FACTOR-RELATED"/>
    <property type="match status" value="1"/>
</dbReference>
<dbReference type="PANTHER" id="PTHR33383:SF1">
    <property type="entry name" value="MEMBRANE PROTEIN INSERTION EFFICIENCY FACTOR-RELATED"/>
    <property type="match status" value="1"/>
</dbReference>
<dbReference type="Pfam" id="PF01809">
    <property type="entry name" value="YidD"/>
    <property type="match status" value="1"/>
</dbReference>
<dbReference type="SMART" id="SM01234">
    <property type="entry name" value="Haemolytic"/>
    <property type="match status" value="1"/>
</dbReference>
<name>YIDD_SHEPA</name>
<protein>
    <recommendedName>
        <fullName evidence="1">Putative membrane protein insertion efficiency factor</fullName>
    </recommendedName>
</protein>
<evidence type="ECO:0000255" key="1">
    <source>
        <dbReference type="HAMAP-Rule" id="MF_00386"/>
    </source>
</evidence>
<reference key="1">
    <citation type="submission" date="2007-10" db="EMBL/GenBank/DDBJ databases">
        <title>Complete sequence of Shewanella pealeana ATCC 700345.</title>
        <authorList>
            <consortium name="US DOE Joint Genome Institute"/>
            <person name="Copeland A."/>
            <person name="Lucas S."/>
            <person name="Lapidus A."/>
            <person name="Barry K."/>
            <person name="Glavina del Rio T."/>
            <person name="Dalin E."/>
            <person name="Tice H."/>
            <person name="Pitluck S."/>
            <person name="Chertkov O."/>
            <person name="Brettin T."/>
            <person name="Bruce D."/>
            <person name="Detter J.C."/>
            <person name="Han C."/>
            <person name="Schmutz J."/>
            <person name="Larimer F."/>
            <person name="Land M."/>
            <person name="Hauser L."/>
            <person name="Kyrpides N."/>
            <person name="Kim E."/>
            <person name="Zhao J.-S.Z."/>
            <person name="Manno D."/>
            <person name="Hawari J."/>
            <person name="Richardson P."/>
        </authorList>
    </citation>
    <scope>NUCLEOTIDE SEQUENCE [LARGE SCALE GENOMIC DNA]</scope>
    <source>
        <strain>ATCC 700345 / ANG-SQ1</strain>
    </source>
</reference>
<proteinExistence type="inferred from homology"/>
<feature type="chain" id="PRO_1000080197" description="Putative membrane protein insertion efficiency factor">
    <location>
        <begin position="1"/>
        <end position="84"/>
    </location>
</feature>
<keyword id="KW-0997">Cell inner membrane</keyword>
<keyword id="KW-1003">Cell membrane</keyword>
<keyword id="KW-0472">Membrane</keyword>
<keyword id="KW-1185">Reference proteome</keyword>